<organism>
    <name type="scientific">Symbiobacterium thermophilum (strain DSM 24528 / JCM 14929 / IAM 14863 / T)</name>
    <dbReference type="NCBI Taxonomy" id="292459"/>
    <lineage>
        <taxon>Bacteria</taxon>
        <taxon>Bacillati</taxon>
        <taxon>Bacillota</taxon>
        <taxon>Clostridia</taxon>
        <taxon>Eubacteriales</taxon>
        <taxon>Symbiobacteriaceae</taxon>
        <taxon>Symbiobacterium</taxon>
    </lineage>
</organism>
<reference key="1">
    <citation type="journal article" date="2004" name="Nucleic Acids Res.">
        <title>Genome sequence of Symbiobacterium thermophilum, an uncultivable bacterium that depends on microbial commensalism.</title>
        <authorList>
            <person name="Ueda K."/>
            <person name="Yamashita A."/>
            <person name="Ishikawa J."/>
            <person name="Shimada M."/>
            <person name="Watsuji T."/>
            <person name="Morimura K."/>
            <person name="Ikeda H."/>
            <person name="Hattori M."/>
            <person name="Beppu T."/>
        </authorList>
    </citation>
    <scope>NUCLEOTIDE SEQUENCE [LARGE SCALE GENOMIC DNA]</scope>
    <source>
        <strain>DSM 24528 / JCM 14929 / IAM 14863 / T</strain>
    </source>
</reference>
<accession>Q67S38</accession>
<evidence type="ECO:0000255" key="1">
    <source>
        <dbReference type="HAMAP-Rule" id="MF_01562"/>
    </source>
</evidence>
<protein>
    <recommendedName>
        <fullName evidence="1">Flotillin-like protein FloA</fullName>
    </recommendedName>
</protein>
<keyword id="KW-1003">Cell membrane</keyword>
<keyword id="KW-0472">Membrane</keyword>
<keyword id="KW-1185">Reference proteome</keyword>
<keyword id="KW-0812">Transmembrane</keyword>
<keyword id="KW-1133">Transmembrane helix</keyword>
<comment type="function">
    <text evidence="1">Found in functional membrane microdomains (FMM) that may be equivalent to eukaryotic membrane rafts. FMMs are highly dynamic and increase in number as cells age. Flotillins are thought to be important factors in membrane fluidity.</text>
</comment>
<comment type="subunit">
    <text evidence="1">Homooligomerizes.</text>
</comment>
<comment type="subcellular location">
    <subcellularLocation>
        <location evidence="1">Cell membrane</location>
        <topology evidence="1">Multi-pass membrane protein</topology>
    </subcellularLocation>
    <subcellularLocation>
        <location evidence="1">Membrane raft</location>
        <topology evidence="1">Multi-pass membrane protein</topology>
    </subcellularLocation>
</comment>
<comment type="similarity">
    <text evidence="1">Belongs to the flotillin-like FloA family.</text>
</comment>
<name>FLOA_SYMTH</name>
<feature type="chain" id="PRO_0000232570" description="Flotillin-like protein FloA">
    <location>
        <begin position="1"/>
        <end position="332"/>
    </location>
</feature>
<feature type="transmembrane region" description="Helical" evidence="1">
    <location>
        <begin position="6"/>
        <end position="26"/>
    </location>
</feature>
<feature type="transmembrane region" description="Helical" evidence="1">
    <location>
        <begin position="28"/>
        <end position="48"/>
    </location>
</feature>
<proteinExistence type="inferred from homology"/>
<gene>
    <name evidence="1" type="primary">floA</name>
    <name type="ordered locus">STH520</name>
</gene>
<sequence length="332" mass="35440">MSMPGLGYLILTFVVLLLLVLFFSFVPVGLWISAAAADVRVGIFYMIGMKLRRVPPHRIVNALIKAEKAGLEISIDKLEAHYLAGGNVDRVIDALIAAQRAGIDLVFERAAAIDLAGRNVLEAVQMSVNPKVIETPVVAGVAQDGIELRAKARVTVRADINRLVGGAGEDTIIARVGEGVVSTIGSAASHKEVLENPDMISRTVLAKGLDAGTAFEIVSIDIADVDVGANIGARLRADQAEAEKVMAQAKAEERRAMAVAEEQEMRAETQRMRAKVVEAEAEVPRALAQALREGRIGVMEYLMMQNLQADTAMREALGGGQRGGQPGGQDQK</sequence>
<dbReference type="EMBL" id="AP006840">
    <property type="protein sequence ID" value="BAD39505.1"/>
    <property type="molecule type" value="Genomic_DNA"/>
</dbReference>
<dbReference type="SMR" id="Q67S38"/>
<dbReference type="STRING" id="292459.STH520"/>
<dbReference type="KEGG" id="sth:STH520"/>
<dbReference type="eggNOG" id="COG4864">
    <property type="taxonomic scope" value="Bacteria"/>
</dbReference>
<dbReference type="HOGENOM" id="CLU_836378_0_0_9"/>
<dbReference type="Proteomes" id="UP000000417">
    <property type="component" value="Chromosome"/>
</dbReference>
<dbReference type="GO" id="GO:0045121">
    <property type="term" value="C:membrane raft"/>
    <property type="evidence" value="ECO:0007669"/>
    <property type="project" value="UniProtKB-SubCell"/>
</dbReference>
<dbReference type="GO" id="GO:0005886">
    <property type="term" value="C:plasma membrane"/>
    <property type="evidence" value="ECO:0007669"/>
    <property type="project" value="UniProtKB-SubCell"/>
</dbReference>
<dbReference type="HAMAP" id="MF_01562">
    <property type="entry name" value="FloA"/>
    <property type="match status" value="1"/>
</dbReference>
<dbReference type="InterPro" id="IPR022853">
    <property type="entry name" value="FloA"/>
</dbReference>
<dbReference type="NCBIfam" id="NF010186">
    <property type="entry name" value="PRK13665.1"/>
    <property type="match status" value="1"/>
</dbReference>
<dbReference type="Pfam" id="PF12127">
    <property type="entry name" value="FloA"/>
    <property type="match status" value="1"/>
</dbReference>